<name>ENO_THEPX</name>
<accession>B0K6X6</accession>
<sequence>MSSIIDIFAREILDSRGNPTVEVEVELDSGAVGRAAVPSGASTGAFEAVELRDGDKSRYLGKGVLKAVQNVNDIIAPELIGMEAQDQVAIDKAMIELDGTPNKSKLGANAILGVSLAVAKAAAEECGLPLYQYIGGVNAKTLPVPMMNILNGGKHADNNVDIQEFMIMPVGAPNFREALRMCSEVYHNLKNVLHSKGLSTTVGDEGGFAPNLTSNEEAIQVILEAIEKAGYVPGEDIVLALDPAATEMYKEDGKYHFEGEGIVRTSAEMVDFWEQLVNKYPIVSIEDGLAEEDWNGWKLLTERLGKKIQLVGDDLFVTNTQRLSKGISMGVANSILIKLNQIGTLTETLDAIEMAKRAGYTAVVSHRSGETEDSTIADLVVGVNAGQIKTGAPARTDRVAKYNQLLRIEEVLGSTAQYLGKNAFYNIKK</sequence>
<comment type="function">
    <text evidence="1">Catalyzes the reversible conversion of 2-phosphoglycerate (2-PG) into phosphoenolpyruvate (PEP). It is essential for the degradation of carbohydrates via glycolysis.</text>
</comment>
<comment type="catalytic activity">
    <reaction evidence="1">
        <text>(2R)-2-phosphoglycerate = phosphoenolpyruvate + H2O</text>
        <dbReference type="Rhea" id="RHEA:10164"/>
        <dbReference type="ChEBI" id="CHEBI:15377"/>
        <dbReference type="ChEBI" id="CHEBI:58289"/>
        <dbReference type="ChEBI" id="CHEBI:58702"/>
        <dbReference type="EC" id="4.2.1.11"/>
    </reaction>
</comment>
<comment type="cofactor">
    <cofactor evidence="1">
        <name>Mg(2+)</name>
        <dbReference type="ChEBI" id="CHEBI:18420"/>
    </cofactor>
    <text evidence="1">Binds a second Mg(2+) ion via substrate during catalysis.</text>
</comment>
<comment type="pathway">
    <text evidence="1">Carbohydrate degradation; glycolysis; pyruvate from D-glyceraldehyde 3-phosphate: step 4/5.</text>
</comment>
<comment type="subcellular location">
    <subcellularLocation>
        <location evidence="1">Cytoplasm</location>
    </subcellularLocation>
    <subcellularLocation>
        <location evidence="1">Secreted</location>
    </subcellularLocation>
    <subcellularLocation>
        <location evidence="1">Cell surface</location>
    </subcellularLocation>
    <text evidence="1">Fractions of enolase are present in both the cytoplasm and on the cell surface.</text>
</comment>
<comment type="similarity">
    <text evidence="1">Belongs to the enolase family.</text>
</comment>
<dbReference type="EC" id="4.2.1.11" evidence="1"/>
<dbReference type="EMBL" id="CP000923">
    <property type="protein sequence ID" value="ABY92602.1"/>
    <property type="molecule type" value="Genomic_DNA"/>
</dbReference>
<dbReference type="RefSeq" id="WP_009053020.1">
    <property type="nucleotide sequence ID" value="NC_010320.1"/>
</dbReference>
<dbReference type="SMR" id="B0K6X6"/>
<dbReference type="KEGG" id="tex:Teth514_1310"/>
<dbReference type="HOGENOM" id="CLU_031223_2_1_9"/>
<dbReference type="UniPathway" id="UPA00109">
    <property type="reaction ID" value="UER00187"/>
</dbReference>
<dbReference type="Proteomes" id="UP000002155">
    <property type="component" value="Chromosome"/>
</dbReference>
<dbReference type="GO" id="GO:0009986">
    <property type="term" value="C:cell surface"/>
    <property type="evidence" value="ECO:0007669"/>
    <property type="project" value="UniProtKB-SubCell"/>
</dbReference>
<dbReference type="GO" id="GO:0005576">
    <property type="term" value="C:extracellular region"/>
    <property type="evidence" value="ECO:0007669"/>
    <property type="project" value="UniProtKB-SubCell"/>
</dbReference>
<dbReference type="GO" id="GO:0000015">
    <property type="term" value="C:phosphopyruvate hydratase complex"/>
    <property type="evidence" value="ECO:0007669"/>
    <property type="project" value="InterPro"/>
</dbReference>
<dbReference type="GO" id="GO:0000287">
    <property type="term" value="F:magnesium ion binding"/>
    <property type="evidence" value="ECO:0007669"/>
    <property type="project" value="UniProtKB-UniRule"/>
</dbReference>
<dbReference type="GO" id="GO:0004634">
    <property type="term" value="F:phosphopyruvate hydratase activity"/>
    <property type="evidence" value="ECO:0007669"/>
    <property type="project" value="UniProtKB-UniRule"/>
</dbReference>
<dbReference type="GO" id="GO:0006096">
    <property type="term" value="P:glycolytic process"/>
    <property type="evidence" value="ECO:0007669"/>
    <property type="project" value="UniProtKB-UniRule"/>
</dbReference>
<dbReference type="CDD" id="cd03313">
    <property type="entry name" value="enolase"/>
    <property type="match status" value="1"/>
</dbReference>
<dbReference type="FunFam" id="3.20.20.120:FF:000001">
    <property type="entry name" value="Enolase"/>
    <property type="match status" value="1"/>
</dbReference>
<dbReference type="FunFam" id="3.30.390.10:FF:000001">
    <property type="entry name" value="Enolase"/>
    <property type="match status" value="1"/>
</dbReference>
<dbReference type="Gene3D" id="3.20.20.120">
    <property type="entry name" value="Enolase-like C-terminal domain"/>
    <property type="match status" value="1"/>
</dbReference>
<dbReference type="Gene3D" id="3.30.390.10">
    <property type="entry name" value="Enolase-like, N-terminal domain"/>
    <property type="match status" value="1"/>
</dbReference>
<dbReference type="HAMAP" id="MF_00318">
    <property type="entry name" value="Enolase"/>
    <property type="match status" value="1"/>
</dbReference>
<dbReference type="InterPro" id="IPR000941">
    <property type="entry name" value="Enolase"/>
</dbReference>
<dbReference type="InterPro" id="IPR036849">
    <property type="entry name" value="Enolase-like_C_sf"/>
</dbReference>
<dbReference type="InterPro" id="IPR029017">
    <property type="entry name" value="Enolase-like_N"/>
</dbReference>
<dbReference type="InterPro" id="IPR020810">
    <property type="entry name" value="Enolase_C"/>
</dbReference>
<dbReference type="InterPro" id="IPR020809">
    <property type="entry name" value="Enolase_CS"/>
</dbReference>
<dbReference type="InterPro" id="IPR020811">
    <property type="entry name" value="Enolase_N"/>
</dbReference>
<dbReference type="NCBIfam" id="TIGR01060">
    <property type="entry name" value="eno"/>
    <property type="match status" value="1"/>
</dbReference>
<dbReference type="PANTHER" id="PTHR11902">
    <property type="entry name" value="ENOLASE"/>
    <property type="match status" value="1"/>
</dbReference>
<dbReference type="PANTHER" id="PTHR11902:SF1">
    <property type="entry name" value="ENOLASE"/>
    <property type="match status" value="1"/>
</dbReference>
<dbReference type="Pfam" id="PF00113">
    <property type="entry name" value="Enolase_C"/>
    <property type="match status" value="1"/>
</dbReference>
<dbReference type="Pfam" id="PF03952">
    <property type="entry name" value="Enolase_N"/>
    <property type="match status" value="1"/>
</dbReference>
<dbReference type="PIRSF" id="PIRSF001400">
    <property type="entry name" value="Enolase"/>
    <property type="match status" value="1"/>
</dbReference>
<dbReference type="PRINTS" id="PR00148">
    <property type="entry name" value="ENOLASE"/>
</dbReference>
<dbReference type="SFLD" id="SFLDF00002">
    <property type="entry name" value="enolase"/>
    <property type="match status" value="1"/>
</dbReference>
<dbReference type="SFLD" id="SFLDG00178">
    <property type="entry name" value="enolase"/>
    <property type="match status" value="1"/>
</dbReference>
<dbReference type="SMART" id="SM01192">
    <property type="entry name" value="Enolase_C"/>
    <property type="match status" value="1"/>
</dbReference>
<dbReference type="SMART" id="SM01193">
    <property type="entry name" value="Enolase_N"/>
    <property type="match status" value="1"/>
</dbReference>
<dbReference type="SUPFAM" id="SSF51604">
    <property type="entry name" value="Enolase C-terminal domain-like"/>
    <property type="match status" value="1"/>
</dbReference>
<dbReference type="SUPFAM" id="SSF54826">
    <property type="entry name" value="Enolase N-terminal domain-like"/>
    <property type="match status" value="1"/>
</dbReference>
<dbReference type="PROSITE" id="PS00164">
    <property type="entry name" value="ENOLASE"/>
    <property type="match status" value="1"/>
</dbReference>
<feature type="chain" id="PRO_1000115927" description="Enolase">
    <location>
        <begin position="1"/>
        <end position="429"/>
    </location>
</feature>
<feature type="active site" description="Proton donor" evidence="1">
    <location>
        <position position="205"/>
    </location>
</feature>
<feature type="active site" description="Proton acceptor" evidence="1">
    <location>
        <position position="338"/>
    </location>
</feature>
<feature type="binding site" evidence="1">
    <location>
        <position position="163"/>
    </location>
    <ligand>
        <name>(2R)-2-phosphoglycerate</name>
        <dbReference type="ChEBI" id="CHEBI:58289"/>
    </ligand>
</feature>
<feature type="binding site" evidence="1">
    <location>
        <position position="242"/>
    </location>
    <ligand>
        <name>Mg(2+)</name>
        <dbReference type="ChEBI" id="CHEBI:18420"/>
    </ligand>
</feature>
<feature type="binding site" evidence="1">
    <location>
        <position position="286"/>
    </location>
    <ligand>
        <name>Mg(2+)</name>
        <dbReference type="ChEBI" id="CHEBI:18420"/>
    </ligand>
</feature>
<feature type="binding site" evidence="1">
    <location>
        <position position="313"/>
    </location>
    <ligand>
        <name>Mg(2+)</name>
        <dbReference type="ChEBI" id="CHEBI:18420"/>
    </ligand>
</feature>
<feature type="binding site" evidence="1">
    <location>
        <position position="338"/>
    </location>
    <ligand>
        <name>(2R)-2-phosphoglycerate</name>
        <dbReference type="ChEBI" id="CHEBI:58289"/>
    </ligand>
</feature>
<feature type="binding site" evidence="1">
    <location>
        <position position="367"/>
    </location>
    <ligand>
        <name>(2R)-2-phosphoglycerate</name>
        <dbReference type="ChEBI" id="CHEBI:58289"/>
    </ligand>
</feature>
<feature type="binding site" evidence="1">
    <location>
        <position position="368"/>
    </location>
    <ligand>
        <name>(2R)-2-phosphoglycerate</name>
        <dbReference type="ChEBI" id="CHEBI:58289"/>
    </ligand>
</feature>
<feature type="binding site" evidence="1">
    <location>
        <position position="389"/>
    </location>
    <ligand>
        <name>(2R)-2-phosphoglycerate</name>
        <dbReference type="ChEBI" id="CHEBI:58289"/>
    </ligand>
</feature>
<evidence type="ECO:0000255" key="1">
    <source>
        <dbReference type="HAMAP-Rule" id="MF_00318"/>
    </source>
</evidence>
<proteinExistence type="inferred from homology"/>
<reference key="1">
    <citation type="submission" date="2008-01" db="EMBL/GenBank/DDBJ databases">
        <title>Complete sequence of Thermoanaerobacter sp. X514.</title>
        <authorList>
            <consortium name="US DOE Joint Genome Institute"/>
            <person name="Copeland A."/>
            <person name="Lucas S."/>
            <person name="Lapidus A."/>
            <person name="Barry K."/>
            <person name="Glavina del Rio T."/>
            <person name="Dalin E."/>
            <person name="Tice H."/>
            <person name="Pitluck S."/>
            <person name="Bruce D."/>
            <person name="Goodwin L."/>
            <person name="Saunders E."/>
            <person name="Brettin T."/>
            <person name="Detter J.C."/>
            <person name="Han C."/>
            <person name="Schmutz J."/>
            <person name="Larimer F."/>
            <person name="Land M."/>
            <person name="Hauser L."/>
            <person name="Kyrpides N."/>
            <person name="Kim E."/>
            <person name="Hemme C."/>
            <person name="Fields M.W."/>
            <person name="He Z."/>
            <person name="Zhou J."/>
            <person name="Richardson P."/>
        </authorList>
    </citation>
    <scope>NUCLEOTIDE SEQUENCE [LARGE SCALE GENOMIC DNA]</scope>
    <source>
        <strain>X514</strain>
    </source>
</reference>
<organism>
    <name type="scientific">Thermoanaerobacter sp. (strain X514)</name>
    <dbReference type="NCBI Taxonomy" id="399726"/>
    <lineage>
        <taxon>Bacteria</taxon>
        <taxon>Bacillati</taxon>
        <taxon>Bacillota</taxon>
        <taxon>Clostridia</taxon>
        <taxon>Thermoanaerobacterales</taxon>
        <taxon>Thermoanaerobacteraceae</taxon>
        <taxon>Thermoanaerobacter</taxon>
    </lineage>
</organism>
<gene>
    <name evidence="1" type="primary">eno</name>
    <name type="ordered locus">Teth514_1310</name>
</gene>
<protein>
    <recommendedName>
        <fullName evidence="1">Enolase</fullName>
        <ecNumber evidence="1">4.2.1.11</ecNumber>
    </recommendedName>
    <alternativeName>
        <fullName evidence="1">2-phospho-D-glycerate hydro-lyase</fullName>
    </alternativeName>
    <alternativeName>
        <fullName evidence="1">2-phosphoglycerate dehydratase</fullName>
    </alternativeName>
</protein>
<keyword id="KW-0963">Cytoplasm</keyword>
<keyword id="KW-0324">Glycolysis</keyword>
<keyword id="KW-0456">Lyase</keyword>
<keyword id="KW-0460">Magnesium</keyword>
<keyword id="KW-0479">Metal-binding</keyword>
<keyword id="KW-0964">Secreted</keyword>